<accession>B7MGC5</accession>
<proteinExistence type="inferred from homology"/>
<sequence length="119" mass="13789">MVKLAFPRELRLLTPSQFTFVFQQPQRAGTPQITILGRLNSLGHPRIGLTVAKKNVRRAHERNRIKRLTRESFRLRQHELPAMDFVVVAKKGVADLDNRALSEALEKLWRRHCRLARGS</sequence>
<dbReference type="EC" id="3.1.26.5" evidence="1"/>
<dbReference type="EMBL" id="CU928161">
    <property type="protein sequence ID" value="CAR05333.1"/>
    <property type="molecule type" value="Genomic_DNA"/>
</dbReference>
<dbReference type="RefSeq" id="WP_000239730.1">
    <property type="nucleotide sequence ID" value="NC_011742.1"/>
</dbReference>
<dbReference type="SMR" id="B7MGC5"/>
<dbReference type="GeneID" id="93778446"/>
<dbReference type="KEGG" id="ecz:ECS88_4127"/>
<dbReference type="HOGENOM" id="CLU_117179_11_0_6"/>
<dbReference type="Proteomes" id="UP000000747">
    <property type="component" value="Chromosome"/>
</dbReference>
<dbReference type="GO" id="GO:0030677">
    <property type="term" value="C:ribonuclease P complex"/>
    <property type="evidence" value="ECO:0007669"/>
    <property type="project" value="TreeGrafter"/>
</dbReference>
<dbReference type="GO" id="GO:0042781">
    <property type="term" value="F:3'-tRNA processing endoribonuclease activity"/>
    <property type="evidence" value="ECO:0007669"/>
    <property type="project" value="TreeGrafter"/>
</dbReference>
<dbReference type="GO" id="GO:0004526">
    <property type="term" value="F:ribonuclease P activity"/>
    <property type="evidence" value="ECO:0007669"/>
    <property type="project" value="UniProtKB-UniRule"/>
</dbReference>
<dbReference type="GO" id="GO:0000049">
    <property type="term" value="F:tRNA binding"/>
    <property type="evidence" value="ECO:0007669"/>
    <property type="project" value="UniProtKB-UniRule"/>
</dbReference>
<dbReference type="GO" id="GO:0001682">
    <property type="term" value="P:tRNA 5'-leader removal"/>
    <property type="evidence" value="ECO:0007669"/>
    <property type="project" value="UniProtKB-UniRule"/>
</dbReference>
<dbReference type="FunFam" id="3.30.230.10:FF:000016">
    <property type="entry name" value="Ribonuclease P protein component"/>
    <property type="match status" value="1"/>
</dbReference>
<dbReference type="Gene3D" id="3.30.230.10">
    <property type="match status" value="1"/>
</dbReference>
<dbReference type="HAMAP" id="MF_00227">
    <property type="entry name" value="RNase_P"/>
    <property type="match status" value="1"/>
</dbReference>
<dbReference type="InterPro" id="IPR020568">
    <property type="entry name" value="Ribosomal_Su5_D2-typ_SF"/>
</dbReference>
<dbReference type="InterPro" id="IPR014721">
    <property type="entry name" value="Ribsml_uS5_D2-typ_fold_subgr"/>
</dbReference>
<dbReference type="InterPro" id="IPR000100">
    <property type="entry name" value="RNase_P"/>
</dbReference>
<dbReference type="InterPro" id="IPR020539">
    <property type="entry name" value="RNase_P_CS"/>
</dbReference>
<dbReference type="NCBIfam" id="TIGR00188">
    <property type="entry name" value="rnpA"/>
    <property type="match status" value="1"/>
</dbReference>
<dbReference type="PANTHER" id="PTHR33992">
    <property type="entry name" value="RIBONUCLEASE P PROTEIN COMPONENT"/>
    <property type="match status" value="1"/>
</dbReference>
<dbReference type="PANTHER" id="PTHR33992:SF1">
    <property type="entry name" value="RIBONUCLEASE P PROTEIN COMPONENT"/>
    <property type="match status" value="1"/>
</dbReference>
<dbReference type="Pfam" id="PF00825">
    <property type="entry name" value="Ribonuclease_P"/>
    <property type="match status" value="1"/>
</dbReference>
<dbReference type="SUPFAM" id="SSF54211">
    <property type="entry name" value="Ribosomal protein S5 domain 2-like"/>
    <property type="match status" value="1"/>
</dbReference>
<dbReference type="PROSITE" id="PS00648">
    <property type="entry name" value="RIBONUCLEASE_P"/>
    <property type="match status" value="1"/>
</dbReference>
<gene>
    <name evidence="1" type="primary">rnpA</name>
    <name type="ordered locus">ECS88_4127</name>
</gene>
<reference key="1">
    <citation type="journal article" date="2009" name="PLoS Genet.">
        <title>Organised genome dynamics in the Escherichia coli species results in highly diverse adaptive paths.</title>
        <authorList>
            <person name="Touchon M."/>
            <person name="Hoede C."/>
            <person name="Tenaillon O."/>
            <person name="Barbe V."/>
            <person name="Baeriswyl S."/>
            <person name="Bidet P."/>
            <person name="Bingen E."/>
            <person name="Bonacorsi S."/>
            <person name="Bouchier C."/>
            <person name="Bouvet O."/>
            <person name="Calteau A."/>
            <person name="Chiapello H."/>
            <person name="Clermont O."/>
            <person name="Cruveiller S."/>
            <person name="Danchin A."/>
            <person name="Diard M."/>
            <person name="Dossat C."/>
            <person name="Karoui M.E."/>
            <person name="Frapy E."/>
            <person name="Garry L."/>
            <person name="Ghigo J.M."/>
            <person name="Gilles A.M."/>
            <person name="Johnson J."/>
            <person name="Le Bouguenec C."/>
            <person name="Lescat M."/>
            <person name="Mangenot S."/>
            <person name="Martinez-Jehanne V."/>
            <person name="Matic I."/>
            <person name="Nassif X."/>
            <person name="Oztas S."/>
            <person name="Petit M.A."/>
            <person name="Pichon C."/>
            <person name="Rouy Z."/>
            <person name="Ruf C.S."/>
            <person name="Schneider D."/>
            <person name="Tourret J."/>
            <person name="Vacherie B."/>
            <person name="Vallenet D."/>
            <person name="Medigue C."/>
            <person name="Rocha E.P.C."/>
            <person name="Denamur E."/>
        </authorList>
    </citation>
    <scope>NUCLEOTIDE SEQUENCE [LARGE SCALE GENOMIC DNA]</scope>
    <source>
        <strain>S88 / ExPEC</strain>
    </source>
</reference>
<organism>
    <name type="scientific">Escherichia coli O45:K1 (strain S88 / ExPEC)</name>
    <dbReference type="NCBI Taxonomy" id="585035"/>
    <lineage>
        <taxon>Bacteria</taxon>
        <taxon>Pseudomonadati</taxon>
        <taxon>Pseudomonadota</taxon>
        <taxon>Gammaproteobacteria</taxon>
        <taxon>Enterobacterales</taxon>
        <taxon>Enterobacteriaceae</taxon>
        <taxon>Escherichia</taxon>
    </lineage>
</organism>
<keyword id="KW-0255">Endonuclease</keyword>
<keyword id="KW-0378">Hydrolase</keyword>
<keyword id="KW-0540">Nuclease</keyword>
<keyword id="KW-1185">Reference proteome</keyword>
<keyword id="KW-0694">RNA-binding</keyword>
<keyword id="KW-0819">tRNA processing</keyword>
<comment type="function">
    <text evidence="1">RNaseP catalyzes the removal of the 5'-leader sequence from pre-tRNA to produce the mature 5'-terminus. It can also cleave other RNA substrates such as 4.5S RNA. The protein component plays an auxiliary but essential role in vivo by binding to the 5'-leader sequence and broadening the substrate specificity of the ribozyme.</text>
</comment>
<comment type="catalytic activity">
    <reaction evidence="1">
        <text>Endonucleolytic cleavage of RNA, removing 5'-extranucleotides from tRNA precursor.</text>
        <dbReference type="EC" id="3.1.26.5"/>
    </reaction>
</comment>
<comment type="subunit">
    <text evidence="1">Consists of a catalytic RNA component (M1 or rnpB) and a protein subunit.</text>
</comment>
<comment type="similarity">
    <text evidence="1">Belongs to the RnpA family.</text>
</comment>
<evidence type="ECO:0000255" key="1">
    <source>
        <dbReference type="HAMAP-Rule" id="MF_00227"/>
    </source>
</evidence>
<feature type="chain" id="PRO_1000194639" description="Ribonuclease P protein component">
    <location>
        <begin position="1"/>
        <end position="119"/>
    </location>
</feature>
<protein>
    <recommendedName>
        <fullName evidence="1">Ribonuclease P protein component</fullName>
        <shortName evidence="1">RNase P protein</shortName>
        <shortName evidence="1">RNaseP protein</shortName>
        <ecNumber evidence="1">3.1.26.5</ecNumber>
    </recommendedName>
    <alternativeName>
        <fullName evidence="1">Protein C5</fullName>
    </alternativeName>
</protein>
<name>RNPA_ECO45</name>